<proteinExistence type="evidence at protein level"/>
<feature type="chain" id="PRO_0000264232" description="Epoxide hydrolase 3">
    <location>
        <begin position="1"/>
        <end position="360"/>
    </location>
</feature>
<feature type="transmembrane region" description="Helical" evidence="2">
    <location>
        <begin position="22"/>
        <end position="42"/>
    </location>
</feature>
<feature type="active site" description="Nucleophile" evidence="1">
    <location>
        <position position="173"/>
    </location>
</feature>
<feature type="active site" description="Proton donor" evidence="1">
    <location>
        <position position="281"/>
    </location>
</feature>
<feature type="active site" description="Proton acceptor" evidence="1">
    <location>
        <position position="337"/>
    </location>
</feature>
<feature type="mutagenesis site" description="Loss of catalytic activity." evidence="3">
    <original>D</original>
    <variation>A</variation>
    <location>
        <position position="173"/>
    </location>
</feature>
<feature type="mutagenesis site" description="No effect on catalytic activity." evidence="3">
    <original>D</original>
    <variation>N</variation>
    <location>
        <position position="173"/>
    </location>
</feature>
<feature type="mutagenesis site" description="Loss of catalytic activity." evidence="3">
    <original>Y</original>
    <variation>F</variation>
    <location>
        <position position="220"/>
    </location>
</feature>
<feature type="mutagenesis site" description="No effect on catalytic activity." evidence="3">
    <original>Y</original>
    <variation>F</variation>
    <location>
        <position position="280"/>
    </location>
</feature>
<feature type="mutagenesis site" description="Loss of catalytic activity." evidence="3">
    <original>Y</original>
    <variation>F</variation>
    <location>
        <position position="281"/>
    </location>
</feature>
<feature type="mutagenesis site" description="Loss of catalytic activity." evidence="3">
    <original>D</original>
    <variation>A</variation>
    <variation>N</variation>
    <location>
        <position position="307"/>
    </location>
</feature>
<feature type="mutagenesis site" description="Loss of catalytic activity." evidence="3">
    <original>H</original>
    <variation>Q</variation>
    <location>
        <position position="337"/>
    </location>
</feature>
<name>EPHX3_HUMAN</name>
<keyword id="KW-0256">Endoplasmic reticulum</keyword>
<keyword id="KW-0378">Hydrolase</keyword>
<keyword id="KW-0443">Lipid metabolism</keyword>
<keyword id="KW-0472">Membrane</keyword>
<keyword id="KW-0492">Microsome</keyword>
<keyword id="KW-1267">Proteomics identification</keyword>
<keyword id="KW-1185">Reference proteome</keyword>
<keyword id="KW-0812">Transmembrane</keyword>
<keyword id="KW-1133">Transmembrane helix</keyword>
<dbReference type="EC" id="3.3.2.10" evidence="3"/>
<dbReference type="EMBL" id="AK026061">
    <property type="protein sequence ID" value="BAB15342.1"/>
    <property type="molecule type" value="mRNA"/>
</dbReference>
<dbReference type="EMBL" id="CH471106">
    <property type="protein sequence ID" value="EAW84467.1"/>
    <property type="molecule type" value="Genomic_DNA"/>
</dbReference>
<dbReference type="EMBL" id="BC115002">
    <property type="protein sequence ID" value="AAI15003.1"/>
    <property type="molecule type" value="mRNA"/>
</dbReference>
<dbReference type="EMBL" id="BC132958">
    <property type="protein sequence ID" value="AAI32959.1"/>
    <property type="molecule type" value="mRNA"/>
</dbReference>
<dbReference type="EMBL" id="BC132960">
    <property type="protein sequence ID" value="AAI32961.1"/>
    <property type="molecule type" value="mRNA"/>
</dbReference>
<dbReference type="CCDS" id="CCDS12327.1"/>
<dbReference type="RefSeq" id="NP_001136358.1">
    <property type="nucleotide sequence ID" value="NM_001142886.2"/>
</dbReference>
<dbReference type="RefSeq" id="NP_079070.1">
    <property type="nucleotide sequence ID" value="NM_024794.3"/>
</dbReference>
<dbReference type="RefSeq" id="XP_024307493.1">
    <property type="nucleotide sequence ID" value="XM_024451725.2"/>
</dbReference>
<dbReference type="RefSeq" id="XP_047295408.1">
    <property type="nucleotide sequence ID" value="XM_047439452.1"/>
</dbReference>
<dbReference type="RefSeq" id="XP_054178167.1">
    <property type="nucleotide sequence ID" value="XM_054322192.1"/>
</dbReference>
<dbReference type="RefSeq" id="XP_054178168.1">
    <property type="nucleotide sequence ID" value="XM_054322193.1"/>
</dbReference>
<dbReference type="SMR" id="Q9H6B9"/>
<dbReference type="BioGRID" id="122942">
    <property type="interactions" value="2"/>
</dbReference>
<dbReference type="FunCoup" id="Q9H6B9">
    <property type="interactions" value="7"/>
</dbReference>
<dbReference type="IntAct" id="Q9H6B9">
    <property type="interactions" value="1"/>
</dbReference>
<dbReference type="STRING" id="9606.ENSP00000221730"/>
<dbReference type="SwissLipids" id="SLP:000001116"/>
<dbReference type="ESTHER" id="human-EPHX3">
    <property type="family name" value="Epoxide_hydrolase"/>
</dbReference>
<dbReference type="MEROPS" id="S33.978"/>
<dbReference type="iPTMnet" id="Q9H6B9"/>
<dbReference type="PhosphoSitePlus" id="Q9H6B9"/>
<dbReference type="BioMuta" id="EPHX3"/>
<dbReference type="DMDM" id="74718486"/>
<dbReference type="MassIVE" id="Q9H6B9"/>
<dbReference type="PaxDb" id="9606-ENSP00000221730"/>
<dbReference type="PeptideAtlas" id="Q9H6B9"/>
<dbReference type="ProteomicsDB" id="80974"/>
<dbReference type="Antibodypedia" id="26990">
    <property type="antibodies" value="125 antibodies from 25 providers"/>
</dbReference>
<dbReference type="DNASU" id="79852"/>
<dbReference type="Ensembl" id="ENST00000221730.8">
    <property type="protein sequence ID" value="ENSP00000221730.2"/>
    <property type="gene ID" value="ENSG00000105131.8"/>
</dbReference>
<dbReference type="Ensembl" id="ENST00000435261.5">
    <property type="protein sequence ID" value="ENSP00000410323.1"/>
    <property type="gene ID" value="ENSG00000105131.8"/>
</dbReference>
<dbReference type="Ensembl" id="ENST00000602233.5">
    <property type="protein sequence ID" value="ENSP00000469345.1"/>
    <property type="gene ID" value="ENSG00000105131.8"/>
</dbReference>
<dbReference type="GeneID" id="79852"/>
<dbReference type="KEGG" id="hsa:79852"/>
<dbReference type="MANE-Select" id="ENST00000221730.8">
    <property type="protein sequence ID" value="ENSP00000221730.2"/>
    <property type="RefSeq nucleotide sequence ID" value="NM_024794.3"/>
    <property type="RefSeq protein sequence ID" value="NP_079070.1"/>
</dbReference>
<dbReference type="UCSC" id="uc002nap.4">
    <property type="organism name" value="human"/>
</dbReference>
<dbReference type="AGR" id="HGNC:23760"/>
<dbReference type="CTD" id="79852"/>
<dbReference type="DisGeNET" id="79852"/>
<dbReference type="GeneCards" id="EPHX3"/>
<dbReference type="HGNC" id="HGNC:23760">
    <property type="gene designation" value="EPHX3"/>
</dbReference>
<dbReference type="HPA" id="ENSG00000105131">
    <property type="expression patterns" value="Tissue enhanced (esophagus, skin, vagina)"/>
</dbReference>
<dbReference type="MIM" id="617400">
    <property type="type" value="gene"/>
</dbReference>
<dbReference type="neXtProt" id="NX_Q9H6B9"/>
<dbReference type="OpenTargets" id="ENSG00000105131"/>
<dbReference type="PharmGKB" id="PA164719188"/>
<dbReference type="VEuPathDB" id="HostDB:ENSG00000105131"/>
<dbReference type="eggNOG" id="KOG4178">
    <property type="taxonomic scope" value="Eukaryota"/>
</dbReference>
<dbReference type="GeneTree" id="ENSGT00940000162086"/>
<dbReference type="HOGENOM" id="CLU_020336_7_3_1"/>
<dbReference type="InParanoid" id="Q9H6B9"/>
<dbReference type="OMA" id="QNWFSWR"/>
<dbReference type="OrthoDB" id="408373at2759"/>
<dbReference type="PAN-GO" id="Q9H6B9">
    <property type="GO annotations" value="2 GO annotations based on evolutionary models"/>
</dbReference>
<dbReference type="PhylomeDB" id="Q9H6B9"/>
<dbReference type="TreeFam" id="TF314403"/>
<dbReference type="BioCyc" id="MetaCyc:ENSG00000105131-MONOMER"/>
<dbReference type="BRENDA" id="3.3.2.10">
    <property type="organism ID" value="2681"/>
</dbReference>
<dbReference type="PathwayCommons" id="Q9H6B9"/>
<dbReference type="SABIO-RK" id="Q9H6B9"/>
<dbReference type="BioGRID-ORCS" id="79852">
    <property type="hits" value="11 hits in 1149 CRISPR screens"/>
</dbReference>
<dbReference type="ChiTaRS" id="EPHX3">
    <property type="organism name" value="human"/>
</dbReference>
<dbReference type="GenomeRNAi" id="79852"/>
<dbReference type="Pharos" id="Q9H6B9">
    <property type="development level" value="Tbio"/>
</dbReference>
<dbReference type="PRO" id="PR:Q9H6B9"/>
<dbReference type="Proteomes" id="UP000005640">
    <property type="component" value="Chromosome 19"/>
</dbReference>
<dbReference type="RNAct" id="Q9H6B9">
    <property type="molecule type" value="protein"/>
</dbReference>
<dbReference type="Bgee" id="ENSG00000105131">
    <property type="expression patterns" value="Expressed in lower esophagus mucosa and 108 other cell types or tissues"/>
</dbReference>
<dbReference type="ExpressionAtlas" id="Q9H6B9">
    <property type="expression patterns" value="baseline and differential"/>
</dbReference>
<dbReference type="GO" id="GO:0005783">
    <property type="term" value="C:endoplasmic reticulum"/>
    <property type="evidence" value="ECO:0007669"/>
    <property type="project" value="UniProtKB-KW"/>
</dbReference>
<dbReference type="GO" id="GO:0043231">
    <property type="term" value="C:intracellular membrane-bounded organelle"/>
    <property type="evidence" value="ECO:0000314"/>
    <property type="project" value="UniProtKB"/>
</dbReference>
<dbReference type="GO" id="GO:0016020">
    <property type="term" value="C:membrane"/>
    <property type="evidence" value="ECO:0000314"/>
    <property type="project" value="UniProtKB"/>
</dbReference>
<dbReference type="GO" id="GO:0004301">
    <property type="term" value="F:epoxide hydrolase activity"/>
    <property type="evidence" value="ECO:0000315"/>
    <property type="project" value="UniProtKB"/>
</dbReference>
<dbReference type="GO" id="GO:0016787">
    <property type="term" value="F:hydrolase activity"/>
    <property type="evidence" value="ECO:0000318"/>
    <property type="project" value="GO_Central"/>
</dbReference>
<dbReference type="GO" id="GO:0097176">
    <property type="term" value="P:epoxide metabolic process"/>
    <property type="evidence" value="ECO:0000314"/>
    <property type="project" value="UniProtKB"/>
</dbReference>
<dbReference type="GO" id="GO:0006629">
    <property type="term" value="P:lipid metabolic process"/>
    <property type="evidence" value="ECO:0007669"/>
    <property type="project" value="UniProtKB-KW"/>
</dbReference>
<dbReference type="FunFam" id="3.40.50.1820:FF:000161">
    <property type="entry name" value="Epoxide hydrolase"/>
    <property type="match status" value="1"/>
</dbReference>
<dbReference type="Gene3D" id="3.40.50.1820">
    <property type="entry name" value="alpha/beta hydrolase"/>
    <property type="match status" value="1"/>
</dbReference>
<dbReference type="InterPro" id="IPR000073">
    <property type="entry name" value="AB_hydrolase_1"/>
</dbReference>
<dbReference type="InterPro" id="IPR029058">
    <property type="entry name" value="AB_hydrolase_fold"/>
</dbReference>
<dbReference type="InterPro" id="IPR000639">
    <property type="entry name" value="Epox_hydrolase-like"/>
</dbReference>
<dbReference type="PANTHER" id="PTHR43329">
    <property type="entry name" value="EPOXIDE HYDROLASE"/>
    <property type="match status" value="1"/>
</dbReference>
<dbReference type="Pfam" id="PF00561">
    <property type="entry name" value="Abhydrolase_1"/>
    <property type="match status" value="1"/>
</dbReference>
<dbReference type="PRINTS" id="PR00111">
    <property type="entry name" value="ABHYDROLASE"/>
</dbReference>
<dbReference type="PRINTS" id="PR00412">
    <property type="entry name" value="EPOXHYDRLASE"/>
</dbReference>
<dbReference type="SUPFAM" id="SSF53474">
    <property type="entry name" value="alpha/beta-Hydrolases"/>
    <property type="match status" value="1"/>
</dbReference>
<evidence type="ECO:0000250" key="1">
    <source>
        <dbReference type="UniProtKB" id="P34913"/>
    </source>
</evidence>
<evidence type="ECO:0000255" key="2"/>
<evidence type="ECO:0000269" key="3">
    <source>
    </source>
</evidence>
<evidence type="ECO:0000303" key="4">
    <source>
    </source>
</evidence>
<evidence type="ECO:0000305" key="5"/>
<evidence type="ECO:0000305" key="6">
    <source>
    </source>
</evidence>
<sequence>MPELVVTALLAPSRLSLKLLRAFMWSLVFSVALVAAAVYGCIALTHVLCRPRRGCCGRRRSASPACLSDPSLGEHGFLNLKSSGLRLHYVSAGRGNGPLMLFLHGFPENWFSWRYQLREFQSRFHVVAVDLRGYGPSDAPRDVDCYTIDLLLVDIKDVILGLGYSKCILVAHDWGALLAWHFSIYYPSLVERMVVVSGAPMSVYQDYSLHHISQFFRSHYMFLFQLPWLPEKLLSMSDFQILKTTLTHRKTGIPCLTPSELEAFLYNFSQPGGLTGPLNYYRNLFRNFPLEPQELTTPTLLLWGEKDTYLELGLVEAIGSRFVPGRLEAHILPGIGHWIPQSNPQEMHQYMWAFLQDLLD</sequence>
<gene>
    <name type="primary">EPHX3</name>
    <name type="synonym">ABHD9</name>
</gene>
<comment type="function">
    <text evidence="3">Catalyzes the hydrolysis of epoxide-containing fatty acids. Active in vitro against epoxyeicosatrienoic acids (EETs) including 8,9-EET, 9,10-EET, 11,12-EET and 14,15-EET and leukotoxin.</text>
</comment>
<comment type="catalytic activity">
    <reaction evidence="3">
        <text>an epoxide + H2O = an ethanediol</text>
        <dbReference type="Rhea" id="RHEA:19037"/>
        <dbReference type="ChEBI" id="CHEBI:15377"/>
        <dbReference type="ChEBI" id="CHEBI:32955"/>
        <dbReference type="ChEBI" id="CHEBI:140594"/>
        <dbReference type="EC" id="3.3.2.10"/>
    </reaction>
    <physiologicalReaction direction="left-to-right" evidence="6">
        <dbReference type="Rhea" id="RHEA:19038"/>
    </physiologicalReaction>
</comment>
<comment type="catalytic activity">
    <reaction evidence="3">
        <text>9,10-epoxyoctadecanoate + H2O = 9,10-dihydroxyoctadecanoate</text>
        <dbReference type="Rhea" id="RHEA:45352"/>
        <dbReference type="ChEBI" id="CHEBI:15377"/>
        <dbReference type="ChEBI" id="CHEBI:85195"/>
        <dbReference type="ChEBI" id="CHEBI:85197"/>
    </reaction>
    <physiologicalReaction direction="left-to-right" evidence="6">
        <dbReference type="Rhea" id="RHEA:45353"/>
    </physiologicalReaction>
</comment>
<comment type="catalytic activity">
    <reaction evidence="3">
        <text>9,10-epoxy-(12Z)-octadecenoate + H2O = 9,10-dihydroxy-(12Z)-octadecenoate</text>
        <dbReference type="Rhea" id="RHEA:44032"/>
        <dbReference type="ChEBI" id="CHEBI:15377"/>
        <dbReference type="ChEBI" id="CHEBI:84023"/>
        <dbReference type="ChEBI" id="CHEBI:84027"/>
    </reaction>
    <physiologicalReaction direction="left-to-right" evidence="6">
        <dbReference type="Rhea" id="RHEA:44033"/>
    </physiologicalReaction>
</comment>
<comment type="catalytic activity">
    <reaction evidence="3">
        <text>8,9-epoxy-(5Z,11Z,14Z)-eicosatrienoate + H2O = 8,9-dihydroxy-(5Z,11Z,14Z)-eicosatrienoate</text>
        <dbReference type="Rhea" id="RHEA:44048"/>
        <dbReference type="ChEBI" id="CHEBI:15377"/>
        <dbReference type="ChEBI" id="CHEBI:84025"/>
        <dbReference type="ChEBI" id="CHEBI:84032"/>
    </reaction>
    <physiologicalReaction direction="left-to-right" evidence="6">
        <dbReference type="Rhea" id="RHEA:44049"/>
    </physiologicalReaction>
</comment>
<comment type="catalytic activity">
    <reaction evidence="3">
        <text>11,12-epoxy-(5Z,8Z,14Z)-eicosatrienoate + H2O = 11,12-dihydroxy-(5Z,8Z,14Z)-eicosatrienoate</text>
        <dbReference type="Rhea" id="RHEA:44044"/>
        <dbReference type="ChEBI" id="CHEBI:15377"/>
        <dbReference type="ChEBI" id="CHEBI:76625"/>
        <dbReference type="ChEBI" id="CHEBI:84031"/>
    </reaction>
    <physiologicalReaction direction="left-to-right" evidence="6">
        <dbReference type="Rhea" id="RHEA:44045"/>
    </physiologicalReaction>
</comment>
<comment type="catalytic activity">
    <reaction evidence="3">
        <text>14,15-epoxy-(5Z,8Z,11Z)-eicosatrienoate + H2O = 14,15-dihydroxy-(5Z,8Z,11Z)-eicosatrienoate</text>
        <dbReference type="Rhea" id="RHEA:44040"/>
        <dbReference type="ChEBI" id="CHEBI:15377"/>
        <dbReference type="ChEBI" id="CHEBI:84024"/>
        <dbReference type="ChEBI" id="CHEBI:84029"/>
    </reaction>
    <physiologicalReaction direction="left-to-right" evidence="6">
        <dbReference type="Rhea" id="RHEA:44041"/>
    </physiologicalReaction>
</comment>
<comment type="activity regulation">
    <text evidence="3">Inhibited by 1-(1-acetylpiperidin-4-yl)-3-(4-(trifl uoromethoxy)phenyl)urea (TPAU), 1-cyclohexyl-3-dodecylurea (CDU), 12-(3-adamantan-1-yl-ureido)-dodecanoic acid (AUDA), 1-((3S, 5S, 7S)-adamantan-1-yl)-3-(5-(2-(2-ethoxyethoxy) ethoxy)pentyl)urea (AEPU) and to a lesser extent by 8-(3-((3S, 5S, 7S)-adamantan-1-yl)ureido) octanoic acid (AUOA).</text>
</comment>
<comment type="biophysicochemical properties">
    <kinetics>
        <KM evidence="3">30 uM for 8,9-EET</KM>
        <KM evidence="3">80 uM for 11,12-EET</KM>
        <KM evidence="3">130 uM for 14,15-EET</KM>
        <KM evidence="3">25 uM for leukotoxin</KM>
        <Vmax evidence="3">12.0 umol/min/mg enzyme with 8,9-EET as substrate</Vmax>
        <Vmax evidence="3">50.0 umol/min/mg enzyme with 11,12-EET as substrate</Vmax>
        <Vmax evidence="3">60.0 umol/min/mg enzyme with 14,15-EET as substrate</Vmax>
        <Vmax evidence="3">22.0 umol/min/mg enzyme with leukotoxin as substrate</Vmax>
    </kinetics>
</comment>
<comment type="subcellular location">
    <subcellularLocation>
        <location evidence="6">Microsome membrane</location>
        <topology evidence="2">Single-pass membrane protein</topology>
    </subcellularLocation>
</comment>
<comment type="similarity">
    <text evidence="5">Belongs to the AB hydrolase superfamily. Epoxide hydrolase family.</text>
</comment>
<protein>
    <recommendedName>
        <fullName>Epoxide hydrolase 3</fullName>
        <shortName evidence="4">EH3</shortName>
        <ecNumber evidence="3">3.3.2.10</ecNumber>
    </recommendedName>
    <alternativeName>
        <fullName>Abhydrolase domain-containing protein 9</fullName>
    </alternativeName>
</protein>
<organism>
    <name type="scientific">Homo sapiens</name>
    <name type="common">Human</name>
    <dbReference type="NCBI Taxonomy" id="9606"/>
    <lineage>
        <taxon>Eukaryota</taxon>
        <taxon>Metazoa</taxon>
        <taxon>Chordata</taxon>
        <taxon>Craniata</taxon>
        <taxon>Vertebrata</taxon>
        <taxon>Euteleostomi</taxon>
        <taxon>Mammalia</taxon>
        <taxon>Eutheria</taxon>
        <taxon>Euarchontoglires</taxon>
        <taxon>Primates</taxon>
        <taxon>Haplorrhini</taxon>
        <taxon>Catarrhini</taxon>
        <taxon>Hominidae</taxon>
        <taxon>Homo</taxon>
    </lineage>
</organism>
<accession>Q9H6B9</accession>
<accession>A3KMR3</accession>
<reference key="1">
    <citation type="journal article" date="2004" name="Nat. Genet.">
        <title>Complete sequencing and characterization of 21,243 full-length human cDNAs.</title>
        <authorList>
            <person name="Ota T."/>
            <person name="Suzuki Y."/>
            <person name="Nishikawa T."/>
            <person name="Otsuki T."/>
            <person name="Sugiyama T."/>
            <person name="Irie R."/>
            <person name="Wakamatsu A."/>
            <person name="Hayashi K."/>
            <person name="Sato H."/>
            <person name="Nagai K."/>
            <person name="Kimura K."/>
            <person name="Makita H."/>
            <person name="Sekine M."/>
            <person name="Obayashi M."/>
            <person name="Nishi T."/>
            <person name="Shibahara T."/>
            <person name="Tanaka T."/>
            <person name="Ishii S."/>
            <person name="Yamamoto J."/>
            <person name="Saito K."/>
            <person name="Kawai Y."/>
            <person name="Isono Y."/>
            <person name="Nakamura Y."/>
            <person name="Nagahari K."/>
            <person name="Murakami K."/>
            <person name="Yasuda T."/>
            <person name="Iwayanagi T."/>
            <person name="Wagatsuma M."/>
            <person name="Shiratori A."/>
            <person name="Sudo H."/>
            <person name="Hosoiri T."/>
            <person name="Kaku Y."/>
            <person name="Kodaira H."/>
            <person name="Kondo H."/>
            <person name="Sugawara M."/>
            <person name="Takahashi M."/>
            <person name="Kanda K."/>
            <person name="Yokoi T."/>
            <person name="Furuya T."/>
            <person name="Kikkawa E."/>
            <person name="Omura Y."/>
            <person name="Abe K."/>
            <person name="Kamihara K."/>
            <person name="Katsuta N."/>
            <person name="Sato K."/>
            <person name="Tanikawa M."/>
            <person name="Yamazaki M."/>
            <person name="Ninomiya K."/>
            <person name="Ishibashi T."/>
            <person name="Yamashita H."/>
            <person name="Murakawa K."/>
            <person name="Fujimori K."/>
            <person name="Tanai H."/>
            <person name="Kimata M."/>
            <person name="Watanabe M."/>
            <person name="Hiraoka S."/>
            <person name="Chiba Y."/>
            <person name="Ishida S."/>
            <person name="Ono Y."/>
            <person name="Takiguchi S."/>
            <person name="Watanabe S."/>
            <person name="Yosida M."/>
            <person name="Hotuta T."/>
            <person name="Kusano J."/>
            <person name="Kanehori K."/>
            <person name="Takahashi-Fujii A."/>
            <person name="Hara H."/>
            <person name="Tanase T.-O."/>
            <person name="Nomura Y."/>
            <person name="Togiya S."/>
            <person name="Komai F."/>
            <person name="Hara R."/>
            <person name="Takeuchi K."/>
            <person name="Arita M."/>
            <person name="Imose N."/>
            <person name="Musashino K."/>
            <person name="Yuuki H."/>
            <person name="Oshima A."/>
            <person name="Sasaki N."/>
            <person name="Aotsuka S."/>
            <person name="Yoshikawa Y."/>
            <person name="Matsunawa H."/>
            <person name="Ichihara T."/>
            <person name="Shiohata N."/>
            <person name="Sano S."/>
            <person name="Moriya S."/>
            <person name="Momiyama H."/>
            <person name="Satoh N."/>
            <person name="Takami S."/>
            <person name="Terashima Y."/>
            <person name="Suzuki O."/>
            <person name="Nakagawa S."/>
            <person name="Senoh A."/>
            <person name="Mizoguchi H."/>
            <person name="Goto Y."/>
            <person name="Shimizu F."/>
            <person name="Wakebe H."/>
            <person name="Hishigaki H."/>
            <person name="Watanabe T."/>
            <person name="Sugiyama A."/>
            <person name="Takemoto M."/>
            <person name="Kawakami B."/>
            <person name="Yamazaki M."/>
            <person name="Watanabe K."/>
            <person name="Kumagai A."/>
            <person name="Itakura S."/>
            <person name="Fukuzumi Y."/>
            <person name="Fujimori Y."/>
            <person name="Komiyama M."/>
            <person name="Tashiro H."/>
            <person name="Tanigami A."/>
            <person name="Fujiwara T."/>
            <person name="Ono T."/>
            <person name="Yamada K."/>
            <person name="Fujii Y."/>
            <person name="Ozaki K."/>
            <person name="Hirao M."/>
            <person name="Ohmori Y."/>
            <person name="Kawabata A."/>
            <person name="Hikiji T."/>
            <person name="Kobatake N."/>
            <person name="Inagaki H."/>
            <person name="Ikema Y."/>
            <person name="Okamoto S."/>
            <person name="Okitani R."/>
            <person name="Kawakami T."/>
            <person name="Noguchi S."/>
            <person name="Itoh T."/>
            <person name="Shigeta K."/>
            <person name="Senba T."/>
            <person name="Matsumura K."/>
            <person name="Nakajima Y."/>
            <person name="Mizuno T."/>
            <person name="Morinaga M."/>
            <person name="Sasaki M."/>
            <person name="Togashi T."/>
            <person name="Oyama M."/>
            <person name="Hata H."/>
            <person name="Watanabe M."/>
            <person name="Komatsu T."/>
            <person name="Mizushima-Sugano J."/>
            <person name="Satoh T."/>
            <person name="Shirai Y."/>
            <person name="Takahashi Y."/>
            <person name="Nakagawa K."/>
            <person name="Okumura K."/>
            <person name="Nagase T."/>
            <person name="Nomura N."/>
            <person name="Kikuchi H."/>
            <person name="Masuho Y."/>
            <person name="Yamashita R."/>
            <person name="Nakai K."/>
            <person name="Yada T."/>
            <person name="Nakamura Y."/>
            <person name="Ohara O."/>
            <person name="Isogai T."/>
            <person name="Sugano S."/>
        </authorList>
    </citation>
    <scope>NUCLEOTIDE SEQUENCE [LARGE SCALE MRNA]</scope>
</reference>
<reference key="2">
    <citation type="submission" date="2005-07" db="EMBL/GenBank/DDBJ databases">
        <authorList>
            <person name="Mural R.J."/>
            <person name="Istrail S."/>
            <person name="Sutton G.G."/>
            <person name="Florea L."/>
            <person name="Halpern A.L."/>
            <person name="Mobarry C.M."/>
            <person name="Lippert R."/>
            <person name="Walenz B."/>
            <person name="Shatkay H."/>
            <person name="Dew I."/>
            <person name="Miller J.R."/>
            <person name="Flanigan M.J."/>
            <person name="Edwards N.J."/>
            <person name="Bolanos R."/>
            <person name="Fasulo D."/>
            <person name="Halldorsson B.V."/>
            <person name="Hannenhalli S."/>
            <person name="Turner R."/>
            <person name="Yooseph S."/>
            <person name="Lu F."/>
            <person name="Nusskern D.R."/>
            <person name="Shue B.C."/>
            <person name="Zheng X.H."/>
            <person name="Zhong F."/>
            <person name="Delcher A.L."/>
            <person name="Huson D.H."/>
            <person name="Kravitz S.A."/>
            <person name="Mouchard L."/>
            <person name="Reinert K."/>
            <person name="Remington K.A."/>
            <person name="Clark A.G."/>
            <person name="Waterman M.S."/>
            <person name="Eichler E.E."/>
            <person name="Adams M.D."/>
            <person name="Hunkapiller M.W."/>
            <person name="Myers E.W."/>
            <person name="Venter J.C."/>
        </authorList>
    </citation>
    <scope>NUCLEOTIDE SEQUENCE [LARGE SCALE GENOMIC DNA]</scope>
</reference>
<reference key="3">
    <citation type="journal article" date="2004" name="Genome Res.">
        <title>The status, quality, and expansion of the NIH full-length cDNA project: the Mammalian Gene Collection (MGC).</title>
        <authorList>
            <consortium name="The MGC Project Team"/>
        </authorList>
    </citation>
    <scope>NUCLEOTIDE SEQUENCE [LARGE SCALE MRNA]</scope>
    <source>
        <tissue>Brain</tissue>
        <tissue>Embryonic stem cell</tissue>
    </source>
</reference>
<reference key="4">
    <citation type="journal article" date="2012" name="J. Lipid Res.">
        <title>EH3 (ABHD9): the first member of a new epoxide hydrolase family with high activity for fatty acid epoxides.</title>
        <authorList>
            <person name="Decker M."/>
            <person name="Adamska M."/>
            <person name="Cronin A."/>
            <person name="Di Giallonardo F."/>
            <person name="Burgener J."/>
            <person name="Marowsky A."/>
            <person name="Falck J.R."/>
            <person name="Morisseau C."/>
            <person name="Hammock B.D."/>
            <person name="Gruzdev A."/>
            <person name="Zeldin D.C."/>
            <person name="Arand M."/>
        </authorList>
    </citation>
    <scope>FUNCTION</scope>
    <scope>CATALYTIC ACTIVITY</scope>
    <scope>ACTIVITY REGULATION</scope>
    <scope>BIOPHYSICOCHEMICAL PROPERTIES</scope>
    <scope>SUBCELLULAR LOCATION</scope>
    <scope>MUTAGENESIS OF ASP-173; TYR-220; TYR-280; TYR-281; ASP-307 AND HIS-337</scope>
</reference>